<evidence type="ECO:0000255" key="1">
    <source>
        <dbReference type="HAMAP-Rule" id="MF_00272"/>
    </source>
</evidence>
<evidence type="ECO:0000255" key="2">
    <source>
        <dbReference type="PROSITE-ProRule" id="PRU01066"/>
    </source>
</evidence>
<dbReference type="EMBL" id="CP001074">
    <property type="protein sequence ID" value="ACE91305.1"/>
    <property type="molecule type" value="Genomic_DNA"/>
</dbReference>
<dbReference type="SMR" id="B3PP19"/>
<dbReference type="KEGG" id="rec:RHECIAT_CH0002351"/>
<dbReference type="eggNOG" id="COG0509">
    <property type="taxonomic scope" value="Bacteria"/>
</dbReference>
<dbReference type="HOGENOM" id="CLU_097408_2_0_5"/>
<dbReference type="Proteomes" id="UP000008817">
    <property type="component" value="Chromosome"/>
</dbReference>
<dbReference type="GO" id="GO:0005737">
    <property type="term" value="C:cytoplasm"/>
    <property type="evidence" value="ECO:0007669"/>
    <property type="project" value="TreeGrafter"/>
</dbReference>
<dbReference type="GO" id="GO:0005960">
    <property type="term" value="C:glycine cleavage complex"/>
    <property type="evidence" value="ECO:0007669"/>
    <property type="project" value="InterPro"/>
</dbReference>
<dbReference type="GO" id="GO:0019464">
    <property type="term" value="P:glycine decarboxylation via glycine cleavage system"/>
    <property type="evidence" value="ECO:0007669"/>
    <property type="project" value="UniProtKB-UniRule"/>
</dbReference>
<dbReference type="CDD" id="cd06848">
    <property type="entry name" value="GCS_H"/>
    <property type="match status" value="1"/>
</dbReference>
<dbReference type="Gene3D" id="2.40.50.100">
    <property type="match status" value="1"/>
</dbReference>
<dbReference type="HAMAP" id="MF_00272">
    <property type="entry name" value="GcvH"/>
    <property type="match status" value="1"/>
</dbReference>
<dbReference type="InterPro" id="IPR003016">
    <property type="entry name" value="2-oxoA_DH_lipoyl-BS"/>
</dbReference>
<dbReference type="InterPro" id="IPR000089">
    <property type="entry name" value="Biotin_lipoyl"/>
</dbReference>
<dbReference type="InterPro" id="IPR002930">
    <property type="entry name" value="GCV_H"/>
</dbReference>
<dbReference type="InterPro" id="IPR033753">
    <property type="entry name" value="GCV_H/Fam206"/>
</dbReference>
<dbReference type="InterPro" id="IPR017453">
    <property type="entry name" value="GCV_H_sub"/>
</dbReference>
<dbReference type="InterPro" id="IPR011053">
    <property type="entry name" value="Single_hybrid_motif"/>
</dbReference>
<dbReference type="NCBIfam" id="TIGR00527">
    <property type="entry name" value="gcvH"/>
    <property type="match status" value="1"/>
</dbReference>
<dbReference type="NCBIfam" id="NF002270">
    <property type="entry name" value="PRK01202.1"/>
    <property type="match status" value="1"/>
</dbReference>
<dbReference type="PANTHER" id="PTHR11715">
    <property type="entry name" value="GLYCINE CLEAVAGE SYSTEM H PROTEIN"/>
    <property type="match status" value="1"/>
</dbReference>
<dbReference type="PANTHER" id="PTHR11715:SF3">
    <property type="entry name" value="GLYCINE CLEAVAGE SYSTEM H PROTEIN-RELATED"/>
    <property type="match status" value="1"/>
</dbReference>
<dbReference type="Pfam" id="PF01597">
    <property type="entry name" value="GCV_H"/>
    <property type="match status" value="1"/>
</dbReference>
<dbReference type="SUPFAM" id="SSF51230">
    <property type="entry name" value="Single hybrid motif"/>
    <property type="match status" value="1"/>
</dbReference>
<dbReference type="PROSITE" id="PS50968">
    <property type="entry name" value="BIOTINYL_LIPOYL"/>
    <property type="match status" value="1"/>
</dbReference>
<dbReference type="PROSITE" id="PS00189">
    <property type="entry name" value="LIPOYL"/>
    <property type="match status" value="1"/>
</dbReference>
<reference key="1">
    <citation type="journal article" date="2010" name="Appl. Environ. Microbiol.">
        <title>Conserved symbiotic plasmid DNA sequences in the multireplicon pangenomic structure of Rhizobium etli.</title>
        <authorList>
            <person name="Gonzalez V."/>
            <person name="Acosta J.L."/>
            <person name="Santamaria R.I."/>
            <person name="Bustos P."/>
            <person name="Fernandez J.L."/>
            <person name="Hernandez Gonzalez I.L."/>
            <person name="Diaz R."/>
            <person name="Flores M."/>
            <person name="Palacios R."/>
            <person name="Mora J."/>
            <person name="Davila G."/>
        </authorList>
    </citation>
    <scope>NUCLEOTIDE SEQUENCE [LARGE SCALE GENOMIC DNA]</scope>
    <source>
        <strain>CIAT 652</strain>
    </source>
</reference>
<proteinExistence type="inferred from homology"/>
<accession>B3PP19</accession>
<sequence length="120" mass="12921">MLKFTAEHEWLELDGDVATVGITTYAVEQLGDLVFVELPEVGKSFSKNDDAATVESVKAASEVYCPLDGEITAVNDAIVADPSLINSDPQGAGWFFKLKLKNRADADGLLDEAAYKELIA</sequence>
<feature type="chain" id="PRO_1000114540" description="Glycine cleavage system H protein">
    <location>
        <begin position="1"/>
        <end position="120"/>
    </location>
</feature>
<feature type="domain" description="Lipoyl-binding" evidence="2">
    <location>
        <begin position="17"/>
        <end position="99"/>
    </location>
</feature>
<feature type="modified residue" description="N6-lipoyllysine" evidence="1">
    <location>
        <position position="58"/>
    </location>
</feature>
<gene>
    <name evidence="1" type="primary">gcvH</name>
    <name type="ordered locus">RHECIAT_CH0002351</name>
</gene>
<comment type="function">
    <text evidence="1">The glycine cleavage system catalyzes the degradation of glycine. The H protein shuttles the methylamine group of glycine from the P protein to the T protein.</text>
</comment>
<comment type="cofactor">
    <cofactor evidence="1">
        <name>(R)-lipoate</name>
        <dbReference type="ChEBI" id="CHEBI:83088"/>
    </cofactor>
    <text evidence="1">Binds 1 lipoyl cofactor covalently.</text>
</comment>
<comment type="subunit">
    <text evidence="1">The glycine cleavage system is composed of four proteins: P, T, L and H.</text>
</comment>
<comment type="similarity">
    <text evidence="1">Belongs to the GcvH family.</text>
</comment>
<organism>
    <name type="scientific">Rhizobium etli (strain CIAT 652)</name>
    <dbReference type="NCBI Taxonomy" id="491916"/>
    <lineage>
        <taxon>Bacteria</taxon>
        <taxon>Pseudomonadati</taxon>
        <taxon>Pseudomonadota</taxon>
        <taxon>Alphaproteobacteria</taxon>
        <taxon>Hyphomicrobiales</taxon>
        <taxon>Rhizobiaceae</taxon>
        <taxon>Rhizobium/Agrobacterium group</taxon>
        <taxon>Rhizobium</taxon>
    </lineage>
</organism>
<protein>
    <recommendedName>
        <fullName evidence="1">Glycine cleavage system H protein</fullName>
    </recommendedName>
</protein>
<keyword id="KW-0450">Lipoyl</keyword>
<name>GCSH_RHIE6</name>